<accession>Q97R94</accession>
<keyword id="KW-0028">Amino-acid biosynthesis</keyword>
<keyword id="KW-0963">Cytoplasm</keyword>
<keyword id="KW-0521">NADP</keyword>
<keyword id="KW-0560">Oxidoreductase</keyword>
<keyword id="KW-0641">Proline biosynthesis</keyword>
<keyword id="KW-1185">Reference proteome</keyword>
<organism>
    <name type="scientific">Streptococcus pneumoniae serotype 4 (strain ATCC BAA-334 / TIGR4)</name>
    <dbReference type="NCBI Taxonomy" id="170187"/>
    <lineage>
        <taxon>Bacteria</taxon>
        <taxon>Bacillati</taxon>
        <taxon>Bacillota</taxon>
        <taxon>Bacilli</taxon>
        <taxon>Lactobacillales</taxon>
        <taxon>Streptococcaceae</taxon>
        <taxon>Streptococcus</taxon>
    </lineage>
</organism>
<evidence type="ECO:0000255" key="1">
    <source>
        <dbReference type="HAMAP-Rule" id="MF_00412"/>
    </source>
</evidence>
<gene>
    <name evidence="1" type="primary">proA</name>
    <name type="ordered locus">SP_0932</name>
</gene>
<proteinExistence type="inferred from homology"/>
<comment type="function">
    <text evidence="1">Catalyzes the NADPH-dependent reduction of L-glutamate 5-phosphate into L-glutamate 5-semialdehyde and phosphate. The product spontaneously undergoes cyclization to form 1-pyrroline-5-carboxylate.</text>
</comment>
<comment type="catalytic activity">
    <reaction evidence="1">
        <text>L-glutamate 5-semialdehyde + phosphate + NADP(+) = L-glutamyl 5-phosphate + NADPH + H(+)</text>
        <dbReference type="Rhea" id="RHEA:19541"/>
        <dbReference type="ChEBI" id="CHEBI:15378"/>
        <dbReference type="ChEBI" id="CHEBI:43474"/>
        <dbReference type="ChEBI" id="CHEBI:57783"/>
        <dbReference type="ChEBI" id="CHEBI:58066"/>
        <dbReference type="ChEBI" id="CHEBI:58274"/>
        <dbReference type="ChEBI" id="CHEBI:58349"/>
        <dbReference type="EC" id="1.2.1.41"/>
    </reaction>
</comment>
<comment type="pathway">
    <text evidence="1">Amino-acid biosynthesis; L-proline biosynthesis; L-glutamate 5-semialdehyde from L-glutamate: step 2/2.</text>
</comment>
<comment type="subcellular location">
    <subcellularLocation>
        <location evidence="1">Cytoplasm</location>
    </subcellularLocation>
</comment>
<comment type="similarity">
    <text evidence="1">Belongs to the gamma-glutamyl phosphate reductase family.</text>
</comment>
<feature type="chain" id="PRO_0000189788" description="Gamma-glutamyl phosphate reductase">
    <location>
        <begin position="1"/>
        <end position="420"/>
    </location>
</feature>
<reference key="1">
    <citation type="journal article" date="2001" name="Science">
        <title>Complete genome sequence of a virulent isolate of Streptococcus pneumoniae.</title>
        <authorList>
            <person name="Tettelin H."/>
            <person name="Nelson K.E."/>
            <person name="Paulsen I.T."/>
            <person name="Eisen J.A."/>
            <person name="Read T.D."/>
            <person name="Peterson S.N."/>
            <person name="Heidelberg J.F."/>
            <person name="DeBoy R.T."/>
            <person name="Haft D.H."/>
            <person name="Dodson R.J."/>
            <person name="Durkin A.S."/>
            <person name="Gwinn M.L."/>
            <person name="Kolonay J.F."/>
            <person name="Nelson W.C."/>
            <person name="Peterson J.D."/>
            <person name="Umayam L.A."/>
            <person name="White O."/>
            <person name="Salzberg S.L."/>
            <person name="Lewis M.R."/>
            <person name="Radune D."/>
            <person name="Holtzapple E.K."/>
            <person name="Khouri H.M."/>
            <person name="Wolf A.M."/>
            <person name="Utterback T.R."/>
            <person name="Hansen C.L."/>
            <person name="McDonald L.A."/>
            <person name="Feldblyum T.V."/>
            <person name="Angiuoli S.V."/>
            <person name="Dickinson T."/>
            <person name="Hickey E.K."/>
            <person name="Holt I.E."/>
            <person name="Loftus B.J."/>
            <person name="Yang F."/>
            <person name="Smith H.O."/>
            <person name="Venter J.C."/>
            <person name="Dougherty B.A."/>
            <person name="Morrison D.A."/>
            <person name="Hollingshead S.K."/>
            <person name="Fraser C.M."/>
        </authorList>
    </citation>
    <scope>NUCLEOTIDE SEQUENCE [LARGE SCALE GENOMIC DNA]</scope>
    <source>
        <strain>ATCC BAA-334 / TIGR4</strain>
    </source>
</reference>
<protein>
    <recommendedName>
        <fullName evidence="1">Gamma-glutamyl phosphate reductase</fullName>
        <shortName evidence="1">GPR</shortName>
        <ecNumber evidence="1">1.2.1.41</ecNumber>
    </recommendedName>
    <alternativeName>
        <fullName evidence="1">Glutamate-5-semialdehyde dehydrogenase</fullName>
    </alternativeName>
    <alternativeName>
        <fullName evidence="1">Glutamyl-gamma-semialdehyde dehydrogenase</fullName>
        <shortName evidence="1">GSA dehydrogenase</shortName>
    </alternativeName>
</protein>
<sequence>MVSRQEQFEQVQAVKKSINTASEEVKNQALLAMADHLVAATEEILAANALDMAAAKGKISDVMLDRLYLDADRIEAMARGIREVVALPDPIGEVLETSQLENGLVITKKRVAMGVIGIIYESRPNVTSDAAALTLKSGNAVVLRSGKDAYQTTHAIVTALKKGLETTTIHPNVIQLVEDTSRESSYAMMKAKGYLDLLIPRGGAGLINAVVENAIVPVIETGTGIVHVYVDKDADEDKALSIINNAKTSRPSVCNAMEVLLVHENKAASFLPRLEQVLVAERKEAGLEPIQFRLDSKASQFVSGQAAETQDFDTEFLDYVLAVKVVSSLEEAVAHIESHSTHHSDAIVTENAEAAAYFTDQVDSAAVYVNASTRFTDGGQFGLGCEMGISTQKLHARGPMGLKELTSYKYVVAGDGQIRE</sequence>
<name>PROA_STRPN</name>
<dbReference type="EC" id="1.2.1.41" evidence="1"/>
<dbReference type="EMBL" id="AE005672">
    <property type="protein sequence ID" value="AAK75056.1"/>
    <property type="molecule type" value="Genomic_DNA"/>
</dbReference>
<dbReference type="PIR" id="G95107">
    <property type="entry name" value="G95107"/>
</dbReference>
<dbReference type="RefSeq" id="WP_000254682.1">
    <property type="nucleotide sequence ID" value="NC_003028.3"/>
</dbReference>
<dbReference type="SMR" id="Q97R94"/>
<dbReference type="PaxDb" id="170187-SP_0932"/>
<dbReference type="EnsemblBacteria" id="AAK75056">
    <property type="protein sequence ID" value="AAK75056"/>
    <property type="gene ID" value="SP_0932"/>
</dbReference>
<dbReference type="KEGG" id="spn:SP_0932"/>
<dbReference type="eggNOG" id="COG0014">
    <property type="taxonomic scope" value="Bacteria"/>
</dbReference>
<dbReference type="PhylomeDB" id="Q97R94"/>
<dbReference type="BioCyc" id="SPNE170187:G1FZB-959-MONOMER"/>
<dbReference type="UniPathway" id="UPA00098">
    <property type="reaction ID" value="UER00360"/>
</dbReference>
<dbReference type="Proteomes" id="UP000000585">
    <property type="component" value="Chromosome"/>
</dbReference>
<dbReference type="GO" id="GO:0005737">
    <property type="term" value="C:cytoplasm"/>
    <property type="evidence" value="ECO:0007669"/>
    <property type="project" value="UniProtKB-SubCell"/>
</dbReference>
<dbReference type="GO" id="GO:0004350">
    <property type="term" value="F:glutamate-5-semialdehyde dehydrogenase activity"/>
    <property type="evidence" value="ECO:0007669"/>
    <property type="project" value="UniProtKB-UniRule"/>
</dbReference>
<dbReference type="GO" id="GO:0050661">
    <property type="term" value="F:NADP binding"/>
    <property type="evidence" value="ECO:0007669"/>
    <property type="project" value="InterPro"/>
</dbReference>
<dbReference type="GO" id="GO:0055129">
    <property type="term" value="P:L-proline biosynthetic process"/>
    <property type="evidence" value="ECO:0007669"/>
    <property type="project" value="UniProtKB-UniRule"/>
</dbReference>
<dbReference type="CDD" id="cd07079">
    <property type="entry name" value="ALDH_F18-19_ProA-GPR"/>
    <property type="match status" value="1"/>
</dbReference>
<dbReference type="FunFam" id="3.40.309.10:FF:000006">
    <property type="entry name" value="Gamma-glutamyl phosphate reductase"/>
    <property type="match status" value="1"/>
</dbReference>
<dbReference type="Gene3D" id="3.40.605.10">
    <property type="entry name" value="Aldehyde Dehydrogenase, Chain A, domain 1"/>
    <property type="match status" value="1"/>
</dbReference>
<dbReference type="Gene3D" id="3.40.309.10">
    <property type="entry name" value="Aldehyde Dehydrogenase, Chain A, domain 2"/>
    <property type="match status" value="1"/>
</dbReference>
<dbReference type="HAMAP" id="MF_00412">
    <property type="entry name" value="ProA"/>
    <property type="match status" value="1"/>
</dbReference>
<dbReference type="InterPro" id="IPR016161">
    <property type="entry name" value="Ald_DH/histidinol_DH"/>
</dbReference>
<dbReference type="InterPro" id="IPR016163">
    <property type="entry name" value="Ald_DH_C"/>
</dbReference>
<dbReference type="InterPro" id="IPR016162">
    <property type="entry name" value="Ald_DH_N"/>
</dbReference>
<dbReference type="InterPro" id="IPR015590">
    <property type="entry name" value="Aldehyde_DH_dom"/>
</dbReference>
<dbReference type="InterPro" id="IPR020593">
    <property type="entry name" value="G-glutamylP_reductase_CS"/>
</dbReference>
<dbReference type="InterPro" id="IPR012134">
    <property type="entry name" value="Glu-5-SA_DH"/>
</dbReference>
<dbReference type="InterPro" id="IPR000965">
    <property type="entry name" value="GPR_dom"/>
</dbReference>
<dbReference type="NCBIfam" id="NF001221">
    <property type="entry name" value="PRK00197.1"/>
    <property type="match status" value="1"/>
</dbReference>
<dbReference type="NCBIfam" id="TIGR00407">
    <property type="entry name" value="proA"/>
    <property type="match status" value="1"/>
</dbReference>
<dbReference type="PANTHER" id="PTHR11063:SF8">
    <property type="entry name" value="DELTA-1-PYRROLINE-5-CARBOXYLATE SYNTHASE"/>
    <property type="match status" value="1"/>
</dbReference>
<dbReference type="PANTHER" id="PTHR11063">
    <property type="entry name" value="GLUTAMATE SEMIALDEHYDE DEHYDROGENASE"/>
    <property type="match status" value="1"/>
</dbReference>
<dbReference type="Pfam" id="PF00171">
    <property type="entry name" value="Aldedh"/>
    <property type="match status" value="1"/>
</dbReference>
<dbReference type="PIRSF" id="PIRSF000151">
    <property type="entry name" value="GPR"/>
    <property type="match status" value="1"/>
</dbReference>
<dbReference type="SUPFAM" id="SSF53720">
    <property type="entry name" value="ALDH-like"/>
    <property type="match status" value="1"/>
</dbReference>
<dbReference type="PROSITE" id="PS01223">
    <property type="entry name" value="PROA"/>
    <property type="match status" value="1"/>
</dbReference>